<evidence type="ECO:0000250" key="1"/>
<evidence type="ECO:0000250" key="2">
    <source>
        <dbReference type="UniProtKB" id="P63279"/>
    </source>
</evidence>
<evidence type="ECO:0000250" key="3">
    <source>
        <dbReference type="UniProtKB" id="P63280"/>
    </source>
</evidence>
<evidence type="ECO:0000250" key="4">
    <source>
        <dbReference type="UniProtKB" id="P63281"/>
    </source>
</evidence>
<evidence type="ECO:0000255" key="5">
    <source>
        <dbReference type="PROSITE-ProRule" id="PRU00388"/>
    </source>
</evidence>
<evidence type="ECO:0000255" key="6">
    <source>
        <dbReference type="PROSITE-ProRule" id="PRU10133"/>
    </source>
</evidence>
<evidence type="ECO:0000269" key="7">
    <source>
    </source>
</evidence>
<proteinExistence type="evidence at protein level"/>
<protein>
    <recommendedName>
        <fullName>SUMO-conjugating enzyme UBC9</fullName>
        <ecNumber evidence="2">2.3.2.-</ecNumber>
    </recommendedName>
    <alternativeName>
        <fullName>RING-type E3 SUMO transferase UBC9</fullName>
    </alternativeName>
    <alternativeName>
        <fullName>SUMO-protein ligase</fullName>
    </alternativeName>
    <alternativeName>
        <fullName>Ubiquitin carrier protein 9</fullName>
    </alternativeName>
    <alternativeName>
        <fullName>Ubiquitin carrier protein I</fullName>
    </alternativeName>
    <alternativeName>
        <fullName>Ubiquitin-conjugating enzyme E2 I</fullName>
    </alternativeName>
    <alternativeName>
        <fullName>Ubiquitin-protein ligase I</fullName>
    </alternativeName>
</protein>
<dbReference type="EC" id="2.3.2.-" evidence="2"/>
<dbReference type="EMBL" id="DQ385871">
    <property type="protein sequence ID" value="ABD39323.1"/>
    <property type="molecule type" value="mRNA"/>
</dbReference>
<dbReference type="RefSeq" id="NP_001269197.1">
    <property type="nucleotide sequence ID" value="NM_001282268.1"/>
</dbReference>
<dbReference type="RefSeq" id="XP_013219438.1">
    <property type="nucleotide sequence ID" value="XM_013363984.1"/>
</dbReference>
<dbReference type="SMR" id="Q2EF73"/>
<dbReference type="FunCoup" id="Q2EF73">
    <property type="interactions" value="3980"/>
</dbReference>
<dbReference type="STRING" id="43179.ENSSTOP00000009175"/>
<dbReference type="Ensembl" id="ENSSTOT00000010227.3">
    <property type="protein sequence ID" value="ENSSTOP00000009175.2"/>
    <property type="gene ID" value="ENSSTOG00000010233.3"/>
</dbReference>
<dbReference type="GeneID" id="101955823"/>
<dbReference type="KEGG" id="iti:101955823"/>
<dbReference type="CTD" id="7329"/>
<dbReference type="eggNOG" id="KOG0424">
    <property type="taxonomic scope" value="Eukaryota"/>
</dbReference>
<dbReference type="GeneTree" id="ENSGT00550000075088"/>
<dbReference type="HOGENOM" id="CLU_030988_12_0_1"/>
<dbReference type="InParanoid" id="Q2EF73"/>
<dbReference type="OMA" id="TWECGIP"/>
<dbReference type="OrthoDB" id="6600758at2759"/>
<dbReference type="TreeFam" id="TF101122"/>
<dbReference type="UniPathway" id="UPA00886"/>
<dbReference type="Proteomes" id="UP000005215">
    <property type="component" value="Unassembled WGS sequence"/>
</dbReference>
<dbReference type="GO" id="GO:0005737">
    <property type="term" value="C:cytoplasm"/>
    <property type="evidence" value="ECO:0007669"/>
    <property type="project" value="UniProtKB-SubCell"/>
</dbReference>
<dbReference type="GO" id="GO:0005634">
    <property type="term" value="C:nucleus"/>
    <property type="evidence" value="ECO:0000250"/>
    <property type="project" value="UniProtKB"/>
</dbReference>
<dbReference type="GO" id="GO:0005524">
    <property type="term" value="F:ATP binding"/>
    <property type="evidence" value="ECO:0007669"/>
    <property type="project" value="UniProtKB-KW"/>
</dbReference>
<dbReference type="GO" id="GO:0016740">
    <property type="term" value="F:transferase activity"/>
    <property type="evidence" value="ECO:0007669"/>
    <property type="project" value="UniProtKB-KW"/>
</dbReference>
<dbReference type="GO" id="GO:0051301">
    <property type="term" value="P:cell division"/>
    <property type="evidence" value="ECO:0007669"/>
    <property type="project" value="UniProtKB-KW"/>
</dbReference>
<dbReference type="GO" id="GO:0007059">
    <property type="term" value="P:chromosome segregation"/>
    <property type="evidence" value="ECO:0007669"/>
    <property type="project" value="UniProtKB-KW"/>
</dbReference>
<dbReference type="GO" id="GO:0016925">
    <property type="term" value="P:protein sumoylation"/>
    <property type="evidence" value="ECO:0007669"/>
    <property type="project" value="UniProtKB-UniPathway"/>
</dbReference>
<dbReference type="CDD" id="cd23798">
    <property type="entry name" value="UBCc_UBE2I"/>
    <property type="match status" value="1"/>
</dbReference>
<dbReference type="FunFam" id="3.10.110.10:FF:000013">
    <property type="entry name" value="SUMO-conjugating enzyme UBC9"/>
    <property type="match status" value="1"/>
</dbReference>
<dbReference type="Gene3D" id="3.10.110.10">
    <property type="entry name" value="Ubiquitin Conjugating Enzyme"/>
    <property type="match status" value="1"/>
</dbReference>
<dbReference type="InterPro" id="IPR050113">
    <property type="entry name" value="Ub_conjugating_enzyme"/>
</dbReference>
<dbReference type="InterPro" id="IPR000608">
    <property type="entry name" value="UBQ-conjugat_E2_core"/>
</dbReference>
<dbReference type="InterPro" id="IPR023313">
    <property type="entry name" value="UBQ-conjugating_AS"/>
</dbReference>
<dbReference type="InterPro" id="IPR016135">
    <property type="entry name" value="UBQ-conjugating_enzyme/RWD"/>
</dbReference>
<dbReference type="PANTHER" id="PTHR24067">
    <property type="entry name" value="UBIQUITIN-CONJUGATING ENZYME E2"/>
    <property type="match status" value="1"/>
</dbReference>
<dbReference type="Pfam" id="PF00179">
    <property type="entry name" value="UQ_con"/>
    <property type="match status" value="1"/>
</dbReference>
<dbReference type="SMART" id="SM00212">
    <property type="entry name" value="UBCc"/>
    <property type="match status" value="1"/>
</dbReference>
<dbReference type="SUPFAM" id="SSF54495">
    <property type="entry name" value="UBC-like"/>
    <property type="match status" value="1"/>
</dbReference>
<dbReference type="PROSITE" id="PS00183">
    <property type="entry name" value="UBC_1"/>
    <property type="match status" value="1"/>
</dbReference>
<dbReference type="PROSITE" id="PS50127">
    <property type="entry name" value="UBC_2"/>
    <property type="match status" value="1"/>
</dbReference>
<organism>
    <name type="scientific">Ictidomys tridecemlineatus</name>
    <name type="common">Thirteen-lined ground squirrel</name>
    <name type="synonym">Spermophilus tridecemlineatus</name>
    <dbReference type="NCBI Taxonomy" id="43179"/>
    <lineage>
        <taxon>Eukaryota</taxon>
        <taxon>Metazoa</taxon>
        <taxon>Chordata</taxon>
        <taxon>Craniata</taxon>
        <taxon>Vertebrata</taxon>
        <taxon>Euteleostomi</taxon>
        <taxon>Mammalia</taxon>
        <taxon>Eutheria</taxon>
        <taxon>Euarchontoglires</taxon>
        <taxon>Glires</taxon>
        <taxon>Rodentia</taxon>
        <taxon>Sciuromorpha</taxon>
        <taxon>Sciuridae</taxon>
        <taxon>Xerinae</taxon>
        <taxon>Marmotini</taxon>
        <taxon>Ictidomys</taxon>
    </lineage>
</organism>
<name>UBC9_ICTTR</name>
<accession>Q2EF73</accession>
<reference key="1">
    <citation type="journal article" date="2007" name="J. Cereb. Blood Flow Metab.">
        <title>Protein SUMOylation is massively increased in hibernation torpor and is critical for the cytoprotection provided by ischemic preconditioning and hypothermia in SHSY5Y cells.</title>
        <authorList>
            <person name="Lee Y.J."/>
            <person name="Miyake S."/>
            <person name="Wakita H."/>
            <person name="McMullen D.C."/>
            <person name="Azuma Y."/>
            <person name="Auh S."/>
            <person name="Hallenbeck J.M."/>
        </authorList>
    </citation>
    <scope>NUCLEOTIDE SEQUENCE [MRNA]</scope>
    <scope>INDUCTION</scope>
</reference>
<keyword id="KW-0007">Acetylation</keyword>
<keyword id="KW-0067">ATP-binding</keyword>
<keyword id="KW-0131">Cell cycle</keyword>
<keyword id="KW-0132">Cell division</keyword>
<keyword id="KW-0159">Chromosome partition</keyword>
<keyword id="KW-0963">Cytoplasm</keyword>
<keyword id="KW-1017">Isopeptide bond</keyword>
<keyword id="KW-0498">Mitosis</keyword>
<keyword id="KW-0547">Nucleotide-binding</keyword>
<keyword id="KW-0539">Nucleus</keyword>
<keyword id="KW-0597">Phosphoprotein</keyword>
<keyword id="KW-1185">Reference proteome</keyword>
<keyword id="KW-0808">Transferase</keyword>
<keyword id="KW-0832">Ubl conjugation</keyword>
<keyword id="KW-0833">Ubl conjugation pathway</keyword>
<feature type="initiator methionine" description="Removed" evidence="2">
    <location>
        <position position="1"/>
    </location>
</feature>
<feature type="chain" id="PRO_0000250519" description="SUMO-conjugating enzyme UBC9">
    <location>
        <begin position="2"/>
        <end position="158"/>
    </location>
</feature>
<feature type="domain" description="UBC core" evidence="5">
    <location>
        <begin position="4"/>
        <end position="157"/>
    </location>
</feature>
<feature type="region of interest" description="Interaction with SUMO1" evidence="1">
    <location>
        <begin position="13"/>
        <end position="18"/>
    </location>
</feature>
<feature type="active site" description="Glycyl thioester intermediate" evidence="5 6">
    <location>
        <position position="93"/>
    </location>
</feature>
<feature type="site" description="Interaction with RANBP2" evidence="1">
    <location>
        <position position="4"/>
    </location>
</feature>
<feature type="site" description="Interaction with RANBP2" evidence="1">
    <location>
        <position position="25"/>
    </location>
</feature>
<feature type="site" description="Interaction with RANBP2" evidence="1">
    <location>
        <position position="57"/>
    </location>
</feature>
<feature type="site" description="Substrate binding" evidence="1">
    <location>
        <begin position="100"/>
        <end position="101"/>
    </location>
</feature>
<feature type="modified residue" description="N-acetylserine" evidence="2">
    <location>
        <position position="2"/>
    </location>
</feature>
<feature type="modified residue" description="N6-acetyllysine" evidence="2">
    <location>
        <position position="65"/>
    </location>
</feature>
<feature type="modified residue" description="Phosphoserine; by CDK1" evidence="2">
    <location>
        <position position="71"/>
    </location>
</feature>
<feature type="cross-link" description="Glycyl lysine isopeptide (Lys-Gly) (interchain with G-Cter in SUMO2); alternate" evidence="2">
    <location>
        <position position="18"/>
    </location>
</feature>
<feature type="cross-link" description="Glycyl lysine isopeptide (Lys-Gly) (interchain with G-Cter in ubiquitin); alternate" evidence="2">
    <location>
        <position position="18"/>
    </location>
</feature>
<feature type="cross-link" description="Glycyl lysine isopeptide (Lys-Gly) (interchain with G-Cter in SUMO2)" evidence="2">
    <location>
        <position position="48"/>
    </location>
</feature>
<feature type="cross-link" description="Glycyl lysine isopeptide (Lys-Gly) (interchain with G-Cter in SUMO1); alternate" evidence="2">
    <location>
        <position position="49"/>
    </location>
</feature>
<feature type="cross-link" description="Glycyl lysine isopeptide (Lys-Gly) (interchain with G-Cter in SUMO2); alternate" evidence="2">
    <location>
        <position position="49"/>
    </location>
</feature>
<feature type="cross-link" description="Glycyl lysine isopeptide (Lys-Gly) (interchain with G-Cter in SUMO2)" evidence="2">
    <location>
        <position position="101"/>
    </location>
</feature>
<sequence>MSGIALSRLAQERKAWRKDHPFGFVAVPTKNPDGTMNLMNWECAIPGKKGTPWEGGLFKLRMLFKDDYPSSPPKCKFEPPLFHPNVYPSGTVCLSILEEDKDWRPAITIKQILLGIQELLNEPNIQDPAQAEAYTIYCQNRVEYEKRVRAQAKKFAPS</sequence>
<gene>
    <name type="primary">UBE2I</name>
    <name type="synonym">UBC9</name>
</gene>
<comment type="function">
    <text evidence="2">Accepts the ubiquitin-like proteins SUMO1, SUMO2 and SUMO3 from the UBLE1A-UBLE1B E1 complex and catalyzes their covalent attachment to other proteins with the help of an E3 ligase such as RANBP2, CBX4 and ZNF451. Can catalyze the formation of poly-SUMO chains. Essential for nuclear architecture and chromosome segregation (By similarity). Necessary for sumoylation of FOXL2 and KAT5. Sumoylates p53/TP53 at 'Lys-386'.</text>
</comment>
<comment type="pathway">
    <text evidence="2">Protein modification; protein sumoylation.</text>
</comment>
<comment type="subunit">
    <text evidence="2 3 4">Forms a complex with SENP6 and UBE2I in response to UV irradiation (By similarity). Forms a tight complex with RANGAP1 and RANBP2 (By similarity). Identified in a complex with SUMO2 and UBE2I, where one ZNF451 interacts with one UBE2I and two SUMO2 chains, one bound to the UBE2I active site and the other to another region of the same UBE2I molecule (By similarity). Interacts with SETX (By similarity). Interacts with HIPK1 and HIPK2 (By similarity). Interacts with PPM1J (By similarity). Interacts with RASD2 (By similarity). Interacts with TCF3 (By similarity). Interacts with NR2C1; the interaction promotes its sumoylation (By similarity). Interacts with SIAH1 (By similarity). Interacts with PARP (By similarity). Interacts with various transcription factors such as TFAP2A, TFAP2B, and TFAP2C (By similarity). Interacts with AR (By similarity). Interacts with ETS1 (By similarity). Interacts with SOX4 (By similarity). Interacts with RWDD3; the interaction enhances the sumoylation of a number of proteins such as HIF1A and I-kappa-B (By similarity). Interacts with FOXL2 (By similarity). Interacts with DNM1l (via its GTPase and B domains); the interaction promotes sumoylation of DNM1L, mainly in its B domain (By similarity). Interacts with NFATC2IP; this inhibits formation of poly-SUMO chains (By similarity). Interacts with FHIT (By similarity). Interacts with PRKRA and p53/TP53 (By similarity). Interacts with UHRF2 (By similarity). Interacts with NR3C1 and this interaction is enhanced in the presence of RWDD3 (By similarity). Interacts with MTA1 (By similarity). Interacts with ZNF451 (By similarity). Interacts with CPEB3 (By similarity). Interacts with SUMO1, SUMO2, and SUMO3 (By similarity). Interacts with IPO13 (By similarity). Interacts with DNMT1 (By similarity).</text>
</comment>
<comment type="subcellular location">
    <subcellularLocation>
        <location evidence="3">Nucleus</location>
    </subcellularLocation>
    <subcellularLocation>
        <location evidence="3">Cytoplasm</location>
    </subcellularLocation>
    <text evidence="2 3">Mainly nuclear (By similarity). In spermatocytes, localizes in synaptonemal complexes (By similarity). Recruited by BCL11A into the nuclear body (By similarity).</text>
</comment>
<comment type="induction">
    <text evidence="7">In brain and kidney, during hibernation torpor (at protein level).</text>
</comment>
<comment type="PTM">
    <text evidence="2">Phosphorylation at Ser-71 significantly enhances SUMOylation activity.</text>
</comment>
<comment type="similarity">
    <text evidence="5">Belongs to the ubiquitin-conjugating enzyme family.</text>
</comment>